<sequence>MAAAGCLYRRTSRELWTILLGRSSMKDGHQIKAELDRYGDRLLQGLAYYRPPSTSSTGKVKANKNLSPALQELGLRLSKFLGLDEEQSVELLQTYLLYDYRGTQESVKGVPQDERQSQALMLKASMVDYYYEERISLLRCVLYILNYFQDDKHPYSAEFSKCVEMMEQKELFGKYLKQFESLCREEAPTWETHGNFMTERQVSRWFVQRLREQAMLLEIIFLYFACFAASPSDLLALTKLFKEQGFGCRLQNRHLVEPSMDPLVERIGYFSVLIFLEALDIETLMTCSLSDKTEQHPFSSEEQVCKEMDSVLVTLGDAPHHGPVLLAWALLRFALNADKVTPTVRKMGSTAIQLHIFQYLTRMLQSLRSGENNCTTSTACLCVYTFLTFVLTNLEEQVLQSQQDLVDTAFQVFAAPNLPDLFWNMEPTAGLGILLDSVVGMFPFHLSPLLKLFTALVSKSSAKKVYSFLDRMSSYTEHYRHKPHDILSHEDETLWKRQTPKVLYALGLGQTNLRIPQGTIGQVMADEHGFLVRWEYSYSCWTLFTCEIEMLLHVVSTADVIHQCQRVKPIIDLVHKVISTDLSIADCLLPITSRIYMLLQRLTTVMNPPMDFLSSCVDCLAALATRMPAKVWIDLRHTGFLPFAANPVSGHIISTEGMNAGGYGSLFGIEQSQGEYSITLSFLRLVTTLVKGQLGSTQSQGLVPCILFVLREMLPNYHRWRYNSHGVREQLGFQILSLIHAILNLSPEEEESTSTPNLQSLCIFSLTNTEAGQAVINIMGVGVDTLNAVMLTQAGSSGTEGQGQMLMQTIKLAFSITNNVIRLKPLSSAISPLEHALTQHGAHGNNLIAVLAKYIYHKYDPSLPRLAIQLLKRLAMVAPMSVYACLGSDAAAIRDAFLSRLRDNIEDMQIKIMILEFLTVAVETQPGLIELFLNLEVKDTNEGSKEYSLGEWSCLQVVLKLIDSQDPESSWGAPLLHRSAIAFLHALWQDRRDSAMTVLRTKPNFWENLTSPLFGTLAFPSESSELSILETCAFIMKIICLEIYYAVRGSLGDSLKKILKKFSEEERFTYWSNYVHSLVCQVAESEGACNSLTEYQQLLSAWRMFLMVATHNADVMHLTNPEVRQKLFKDVLGGTQALLLVPRSMTCLHLGSMLCTVMIILLRRWKSDLAAPEDILSSLTQILEGVLQKDQQLVEKTKARVFAALISALEIKPMKASEIPQYPQLVLNVCETLQEEVVFLVDHTRQEVPANDASEDKDSMETEDTGRIRQKDQRDGVCVLGLHLAKGLCEADEEGDQWQQVLRKLPVLPMLFSALEVSLRIKQNLHFCEAILHFLFTLAKTHQGAAAMAGAGVTQTVCLPLLSVYQLSSNGASTAQPALSLRKSLDAPSWPGVYRLTVSLMERLLKTLRYNFLTEALDFVGVHQERILQCLGAVRTVPSLACLEEADHTVGFLLQLSNFTKEWHFHLPQLIKDVQVNLCYLCQACTSLLHSRKMLQHYLQIKNGETMSSTATPRGQRTPQTPSKQPTAESEALELRQLRSVQHSLLKILGKTLATLRAFTPDLCQILQPLDLAQYNLLFALSFTTPAFDADVTPSFGTLLATVNVTLSMLGEMDKKKDHPLGQVLGETNSTVDNKNIKSLLLFIMENCFYLLISQAVRYLRDPSVHPRDKQRMKQELSSELSTLLSSLSRYFRRGGPSSPAGGLMPSPQPKGASAAKVVPEAQEPLIQLVQAFVRHVQR</sequence>
<reference key="1">
    <citation type="journal article" date="2010" name="Science">
        <title>The genome of the Western clawed frog Xenopus tropicalis.</title>
        <authorList>
            <person name="Hellsten U."/>
            <person name="Harland R.M."/>
            <person name="Gilchrist M.J."/>
            <person name="Hendrix D."/>
            <person name="Jurka J."/>
            <person name="Kapitonov V."/>
            <person name="Ovcharenko I."/>
            <person name="Putnam N.H."/>
            <person name="Shu S."/>
            <person name="Taher L."/>
            <person name="Blitz I.L."/>
            <person name="Blumberg B."/>
            <person name="Dichmann D.S."/>
            <person name="Dubchak I."/>
            <person name="Amaya E."/>
            <person name="Detter J.C."/>
            <person name="Fletcher R."/>
            <person name="Gerhard D.S."/>
            <person name="Goodstein D."/>
            <person name="Graves T."/>
            <person name="Grigoriev I.V."/>
            <person name="Grimwood J."/>
            <person name="Kawashima T."/>
            <person name="Lindquist E."/>
            <person name="Lucas S.M."/>
            <person name="Mead P.E."/>
            <person name="Mitros T."/>
            <person name="Ogino H."/>
            <person name="Ohta Y."/>
            <person name="Poliakov A.V."/>
            <person name="Pollet N."/>
            <person name="Robert J."/>
            <person name="Salamov A."/>
            <person name="Sater A.K."/>
            <person name="Schmutz J."/>
            <person name="Terry A."/>
            <person name="Vize P.D."/>
            <person name="Warren W.C."/>
            <person name="Wells D."/>
            <person name="Wills A."/>
            <person name="Wilson R.K."/>
            <person name="Zimmerman L.B."/>
            <person name="Zorn A.M."/>
            <person name="Grainger R."/>
            <person name="Grammer T."/>
            <person name="Khokha M.K."/>
            <person name="Richardson P.M."/>
            <person name="Rokhsar D.S."/>
        </authorList>
    </citation>
    <scope>NUCLEOTIDE SEQUENCE [LARGE SCALE GENOMIC DNA]</scope>
</reference>
<reference key="2">
    <citation type="submission" date="2007-12" db="EMBL/GenBank/DDBJ databases">
        <authorList>
            <consortium name="NIH - Xenopus Gene Collection (XGC) project"/>
        </authorList>
    </citation>
    <scope>NUCLEOTIDE SEQUENCE [LARGE SCALE MRNA]</scope>
    <source>
        <tissue>Testis</tissue>
    </source>
</reference>
<reference key="3">
    <citation type="journal article" date="2011" name="Proc. Natl. Acad. Sci. U.S.A.">
        <title>Rare copy number variations in congenital heart disease patients identify unique genes in left-right patterning.</title>
        <authorList>
            <person name="Fakhro K.A."/>
            <person name="Choi M."/>
            <person name="Ware S.M."/>
            <person name="Belmont J.W."/>
            <person name="Towbin J.A."/>
            <person name="Lifton R.P."/>
            <person name="Khokha M.K."/>
            <person name="Brueckner M."/>
        </authorList>
    </citation>
    <scope>DEVELOPMENTAL STAGE</scope>
    <scope>DISRUPTION PHENOTYPE</scope>
</reference>
<feature type="initiator methionine" description="Removed" evidence="1">
    <location>
        <position position="1"/>
    </location>
</feature>
<feature type="chain" id="PRO_0000425795" description="Nucleoporin NUP188">
    <location>
        <begin position="2"/>
        <end position="1739"/>
    </location>
</feature>
<feature type="region of interest" description="Disordered" evidence="3">
    <location>
        <begin position="1249"/>
        <end position="1269"/>
    </location>
</feature>
<feature type="region of interest" description="Disordered" evidence="3">
    <location>
        <begin position="1506"/>
        <end position="1530"/>
    </location>
</feature>
<feature type="region of interest" description="Disordered" evidence="3">
    <location>
        <begin position="1696"/>
        <end position="1717"/>
    </location>
</feature>
<feature type="compositionally biased region" description="Basic and acidic residues" evidence="3">
    <location>
        <begin position="1254"/>
        <end position="1269"/>
    </location>
</feature>
<feature type="compositionally biased region" description="Polar residues" evidence="3">
    <location>
        <begin position="1506"/>
        <end position="1528"/>
    </location>
</feature>
<feature type="sequence conflict" description="In Ref. 2; AAI55687." evidence="5" ref="2">
    <location>
        <begin position="124"/>
        <end position="125"/>
    </location>
</feature>
<feature type="sequence conflict" description="In Ref. 2; AAI55687." evidence="5" ref="2">
    <original>Q</original>
    <variation>QVQ</variation>
    <location>
        <position position="1568"/>
    </location>
</feature>
<gene>
    <name type="primary">nup188</name>
</gene>
<accession>F6WXT2</accession>
<accession>A9JRJ6</accession>
<dbReference type="EMBL" id="AAMC01047074">
    <property type="status" value="NOT_ANNOTATED_CDS"/>
    <property type="molecule type" value="Genomic_DNA"/>
</dbReference>
<dbReference type="EMBL" id="BC155686">
    <property type="protein sequence ID" value="AAI55687.1"/>
    <property type="molecule type" value="mRNA"/>
</dbReference>
<dbReference type="RefSeq" id="NP_001107292.1">
    <property type="nucleotide sequence ID" value="NM_001113820.1"/>
</dbReference>
<dbReference type="SMR" id="F6WXT2"/>
<dbReference type="FunCoup" id="F6WXT2">
    <property type="interactions" value="3742"/>
</dbReference>
<dbReference type="STRING" id="8364.ENSXETP00000013967"/>
<dbReference type="PaxDb" id="8364-ENSXETP00000028229"/>
<dbReference type="GeneID" id="100135081"/>
<dbReference type="KEGG" id="xtr:100135081"/>
<dbReference type="CTD" id="23511"/>
<dbReference type="eggNOG" id="KOG4833">
    <property type="taxonomic scope" value="Eukaryota"/>
</dbReference>
<dbReference type="HOGENOM" id="CLU_002623_1_0_1"/>
<dbReference type="InParanoid" id="F6WXT2"/>
<dbReference type="OrthoDB" id="102511at2759"/>
<dbReference type="TreeFam" id="TF101106"/>
<dbReference type="Reactome" id="R-XTR-170822">
    <property type="pathway name" value="Regulation of Glucokinase by Glucokinase Regulatory Protein"/>
</dbReference>
<dbReference type="Reactome" id="R-XTR-3108214">
    <property type="pathway name" value="SUMOylation of DNA damage response and repair proteins"/>
</dbReference>
<dbReference type="Reactome" id="R-XTR-3232142">
    <property type="pathway name" value="SUMOylation of ubiquitinylation proteins"/>
</dbReference>
<dbReference type="Reactome" id="R-XTR-3301854">
    <property type="pathway name" value="Nuclear Pore Complex (NPC) Disassembly"/>
</dbReference>
<dbReference type="Reactome" id="R-XTR-3371453">
    <property type="pathway name" value="Regulation of HSF1-mediated heat shock response"/>
</dbReference>
<dbReference type="Reactome" id="R-XTR-4085377">
    <property type="pathway name" value="SUMOylation of SUMOylation proteins"/>
</dbReference>
<dbReference type="Reactome" id="R-XTR-4570464">
    <property type="pathway name" value="SUMOylation of RNA binding proteins"/>
</dbReference>
<dbReference type="Reactome" id="R-XTR-4615885">
    <property type="pathway name" value="SUMOylation of DNA replication proteins"/>
</dbReference>
<dbReference type="Proteomes" id="UP000008143">
    <property type="component" value="Chromosome 8"/>
</dbReference>
<dbReference type="GO" id="GO:0005643">
    <property type="term" value="C:nuclear pore"/>
    <property type="evidence" value="ECO:0007669"/>
    <property type="project" value="UniProtKB-SubCell"/>
</dbReference>
<dbReference type="GO" id="GO:0017056">
    <property type="term" value="F:structural constituent of nuclear pore"/>
    <property type="evidence" value="ECO:0007669"/>
    <property type="project" value="InterPro"/>
</dbReference>
<dbReference type="GO" id="GO:0051028">
    <property type="term" value="P:mRNA transport"/>
    <property type="evidence" value="ECO:0007669"/>
    <property type="project" value="UniProtKB-KW"/>
</dbReference>
<dbReference type="GO" id="GO:0015031">
    <property type="term" value="P:protein transport"/>
    <property type="evidence" value="ECO:0007669"/>
    <property type="project" value="UniProtKB-KW"/>
</dbReference>
<dbReference type="InterPro" id="IPR016024">
    <property type="entry name" value="ARM-type_fold"/>
</dbReference>
<dbReference type="InterPro" id="IPR018864">
    <property type="entry name" value="Nucleoporin_Nup188_N"/>
</dbReference>
<dbReference type="InterPro" id="IPR044840">
    <property type="entry name" value="Nup188"/>
</dbReference>
<dbReference type="InterPro" id="IPR048883">
    <property type="entry name" value="Nup188_N-subdom_III"/>
</dbReference>
<dbReference type="PANTHER" id="PTHR31431:SF1">
    <property type="entry name" value="NUCLEOPORIN NUP188"/>
    <property type="match status" value="1"/>
</dbReference>
<dbReference type="PANTHER" id="PTHR31431">
    <property type="entry name" value="NUCLEOPORIN NUP188 HOMOLOG"/>
    <property type="match status" value="1"/>
</dbReference>
<dbReference type="Pfam" id="PF10487">
    <property type="entry name" value="Nup188_N"/>
    <property type="match status" value="1"/>
</dbReference>
<dbReference type="Pfam" id="PF21093">
    <property type="entry name" value="Nup188_N-subdom_III"/>
    <property type="match status" value="1"/>
</dbReference>
<dbReference type="Pfam" id="PF21094">
    <property type="entry name" value="Nup188_SH3-like"/>
    <property type="match status" value="1"/>
</dbReference>
<dbReference type="SUPFAM" id="SSF48371">
    <property type="entry name" value="ARM repeat"/>
    <property type="match status" value="1"/>
</dbReference>
<evidence type="ECO:0000250" key="1"/>
<evidence type="ECO:0000250" key="2">
    <source>
        <dbReference type="UniProtKB" id="Q5SRE5"/>
    </source>
</evidence>
<evidence type="ECO:0000256" key="3">
    <source>
        <dbReference type="SAM" id="MobiDB-lite"/>
    </source>
</evidence>
<evidence type="ECO:0000269" key="4">
    <source>
    </source>
</evidence>
<evidence type="ECO:0000305" key="5"/>
<comment type="function">
    <text evidence="2">Component of the nuclear pore complex (NPC), a complex required for the trafficking across the nuclear envelope. Required for proper protein transport into the nucleus.</text>
</comment>
<comment type="subunit">
    <text evidence="2">Part of the nuclear pore complex (NPC).</text>
</comment>
<comment type="subcellular location">
    <subcellularLocation>
        <location evidence="2">Nucleus</location>
        <location evidence="2">Nuclear pore complex</location>
    </subcellularLocation>
</comment>
<comment type="developmental stage">
    <text evidence="4">Expressed in the developing kidney at stages 26-29 and 33-36, and in the branchial arches at stage 33-36.</text>
</comment>
<comment type="disruption phenotype">
    <text evidence="4">Morpholino knockdown of the protein causes abnormal heart and gut looping.</text>
</comment>
<comment type="similarity">
    <text evidence="5">Belongs to the Nup188 family.</text>
</comment>
<keyword id="KW-0509">mRNA transport</keyword>
<keyword id="KW-0906">Nuclear pore complex</keyword>
<keyword id="KW-0539">Nucleus</keyword>
<keyword id="KW-0653">Protein transport</keyword>
<keyword id="KW-1185">Reference proteome</keyword>
<keyword id="KW-0811">Translocation</keyword>
<keyword id="KW-0813">Transport</keyword>
<proteinExistence type="evidence at transcript level"/>
<organism>
    <name type="scientific">Xenopus tropicalis</name>
    <name type="common">Western clawed frog</name>
    <name type="synonym">Silurana tropicalis</name>
    <dbReference type="NCBI Taxonomy" id="8364"/>
    <lineage>
        <taxon>Eukaryota</taxon>
        <taxon>Metazoa</taxon>
        <taxon>Chordata</taxon>
        <taxon>Craniata</taxon>
        <taxon>Vertebrata</taxon>
        <taxon>Euteleostomi</taxon>
        <taxon>Amphibia</taxon>
        <taxon>Batrachia</taxon>
        <taxon>Anura</taxon>
        <taxon>Pipoidea</taxon>
        <taxon>Pipidae</taxon>
        <taxon>Xenopodinae</taxon>
        <taxon>Xenopus</taxon>
        <taxon>Silurana</taxon>
    </lineage>
</organism>
<protein>
    <recommendedName>
        <fullName evidence="5">Nucleoporin NUP188</fullName>
    </recommendedName>
</protein>
<name>NU188_XENTR</name>